<reference key="1">
    <citation type="journal article" date="2004" name="Nat. Biotechnol.">
        <title>The genome sequence of the anaerobic, sulfate-reducing bacterium Desulfovibrio vulgaris Hildenborough.</title>
        <authorList>
            <person name="Heidelberg J.F."/>
            <person name="Seshadri R."/>
            <person name="Haveman S.A."/>
            <person name="Hemme C.L."/>
            <person name="Paulsen I.T."/>
            <person name="Kolonay J.F."/>
            <person name="Eisen J.A."/>
            <person name="Ward N.L."/>
            <person name="Methe B.A."/>
            <person name="Brinkac L.M."/>
            <person name="Daugherty S.C."/>
            <person name="DeBoy R.T."/>
            <person name="Dodson R.J."/>
            <person name="Durkin A.S."/>
            <person name="Madupu R."/>
            <person name="Nelson W.C."/>
            <person name="Sullivan S.A."/>
            <person name="Fouts D.E."/>
            <person name="Haft D.H."/>
            <person name="Selengut J."/>
            <person name="Peterson J.D."/>
            <person name="Davidsen T.M."/>
            <person name="Zafar N."/>
            <person name="Zhou L."/>
            <person name="Radune D."/>
            <person name="Dimitrov G."/>
            <person name="Hance M."/>
            <person name="Tran K."/>
            <person name="Khouri H.M."/>
            <person name="Gill J."/>
            <person name="Utterback T.R."/>
            <person name="Feldblyum T.V."/>
            <person name="Wall J.D."/>
            <person name="Voordouw G."/>
            <person name="Fraser C.M."/>
        </authorList>
    </citation>
    <scope>NUCLEOTIDE SEQUENCE [LARGE SCALE GENOMIC DNA]</scope>
    <source>
        <strain>ATCC 29579 / DSM 644 / CCUG 34227 / NCIMB 8303 / VKM B-1760 / Hildenborough</strain>
    </source>
</reference>
<gene>
    <name type="ordered locus">DVU_2133</name>
</gene>
<evidence type="ECO:0000255" key="1"/>
<evidence type="ECO:0000305" key="2"/>
<proteinExistence type="inferred from homology"/>
<keyword id="KW-1003">Cell membrane</keyword>
<keyword id="KW-0472">Membrane</keyword>
<keyword id="KW-1185">Reference proteome</keyword>
<keyword id="KW-0812">Transmembrane</keyword>
<keyword id="KW-1133">Transmembrane helix</keyword>
<accession>Q72A64</accession>
<sequence length="579" mass="61870">MAENESNVVVDQGQTKLSDLWTKEDYWAIWLGFVILIAGMWLFLANPSPEFAQKVDKANGVMAAEAARAPFKTLAYYKAQDDKGKLQGMDTPSGKAIGAFLTTPGAWASDPLEAFVLSKEAADERNAAAKAKFESAKVKSDAALAAAQAAEAAAAGAAFADAALNTEAQAKIAEWRAEHAKMKAAEKKTKTKPFNIATSLPMLMVALGLFFAVGMKFMGHDVPKFLVGFIGVFFVAVLALMMGHQSTMKYWGIGAEAWAIIIGMLVANTVGTPSFIKPALQVEYYIKTGLVLLGAEVLFDKIIAIGIPGIFVAWVVTPIVLICTFIFGQKILKMPSKTLNIVISSDMSVCGTSAAIATAAACRAKKEELTLAIGLSLVFTAIMMIAMPAFIKAVGMPQVLGGAWMGGTIDATGAVAAAGAFLGEKALYVAATIKMIQNVLIGVVAFGVAVYWCARVECREGHSVGWIEIWHRFPKFVLGFLAASVLFSVISGSLGSDMSQIMVNQGVLKGLSSPLRNWFFCLAFTSIGLATNFRELAHYFKGGKPLILYVAGQSFNLVLTLAMAYVMFYIVFPEITAKI</sequence>
<protein>
    <recommendedName>
        <fullName>UPF0324 membrane protein DVU_2133</fullName>
    </recommendedName>
</protein>
<dbReference type="EMBL" id="AE017285">
    <property type="protein sequence ID" value="AAS96606.1"/>
    <property type="molecule type" value="Genomic_DNA"/>
</dbReference>
<dbReference type="RefSeq" id="WP_010939410.1">
    <property type="nucleotide sequence ID" value="NC_002937.3"/>
</dbReference>
<dbReference type="RefSeq" id="YP_011346.1">
    <property type="nucleotide sequence ID" value="NC_002937.3"/>
</dbReference>
<dbReference type="SMR" id="Q72A64"/>
<dbReference type="STRING" id="882.DVU_2133"/>
<dbReference type="PaxDb" id="882-DVU_2133"/>
<dbReference type="EnsemblBacteria" id="AAS96606">
    <property type="protein sequence ID" value="AAS96606"/>
    <property type="gene ID" value="DVU_2133"/>
</dbReference>
<dbReference type="KEGG" id="dvu:DVU_2133"/>
<dbReference type="PATRIC" id="fig|882.5.peg.1945"/>
<dbReference type="eggNOG" id="COG2855">
    <property type="taxonomic scope" value="Bacteria"/>
</dbReference>
<dbReference type="HOGENOM" id="CLU_033541_6_0_7"/>
<dbReference type="OrthoDB" id="9766798at2"/>
<dbReference type="PhylomeDB" id="Q72A64"/>
<dbReference type="Proteomes" id="UP000002194">
    <property type="component" value="Chromosome"/>
</dbReference>
<dbReference type="GO" id="GO:0005886">
    <property type="term" value="C:plasma membrane"/>
    <property type="evidence" value="ECO:0007669"/>
    <property type="project" value="UniProtKB-SubCell"/>
</dbReference>
<dbReference type="InterPro" id="IPR018383">
    <property type="entry name" value="UPF0324_pro"/>
</dbReference>
<dbReference type="PANTHER" id="PTHR30106">
    <property type="entry name" value="INNER MEMBRANE PROTEIN YEIH-RELATED"/>
    <property type="match status" value="1"/>
</dbReference>
<dbReference type="PANTHER" id="PTHR30106:SF1">
    <property type="entry name" value="UPF0324 MEMBRANE PROTEIN FN0533"/>
    <property type="match status" value="1"/>
</dbReference>
<dbReference type="Pfam" id="PF03601">
    <property type="entry name" value="Cons_hypoth698"/>
    <property type="match status" value="1"/>
</dbReference>
<name>Y2133_NITV2</name>
<organism>
    <name type="scientific">Nitratidesulfovibrio vulgaris (strain ATCC 29579 / DSM 644 / CCUG 34227 / NCIMB 8303 / VKM B-1760 / Hildenborough)</name>
    <name type="common">Desulfovibrio vulgaris</name>
    <dbReference type="NCBI Taxonomy" id="882"/>
    <lineage>
        <taxon>Bacteria</taxon>
        <taxon>Pseudomonadati</taxon>
        <taxon>Thermodesulfobacteriota</taxon>
        <taxon>Desulfovibrionia</taxon>
        <taxon>Desulfovibrionales</taxon>
        <taxon>Desulfovibrionaceae</taxon>
        <taxon>Nitratidesulfovibrio</taxon>
    </lineage>
</organism>
<comment type="subcellular location">
    <subcellularLocation>
        <location evidence="2">Cell membrane</location>
        <topology evidence="2">Multi-pass membrane protein</topology>
    </subcellularLocation>
</comment>
<comment type="similarity">
    <text evidence="2">Belongs to the UPF0324 family.</text>
</comment>
<feature type="chain" id="PRO_0000157413" description="UPF0324 membrane protein DVU_2133">
    <location>
        <begin position="1"/>
        <end position="579"/>
    </location>
</feature>
<feature type="transmembrane region" description="Helical" evidence="1">
    <location>
        <begin position="26"/>
        <end position="45"/>
    </location>
</feature>
<feature type="transmembrane region" description="Helical" evidence="1">
    <location>
        <begin position="193"/>
        <end position="215"/>
    </location>
</feature>
<feature type="transmembrane region" description="Helical" evidence="1">
    <location>
        <begin position="225"/>
        <end position="243"/>
    </location>
</feature>
<feature type="transmembrane region" description="Helical" evidence="1">
    <location>
        <begin position="250"/>
        <end position="272"/>
    </location>
</feature>
<feature type="transmembrane region" description="Helical" evidence="1">
    <location>
        <begin position="305"/>
        <end position="327"/>
    </location>
</feature>
<feature type="transmembrane region" description="Helical" evidence="1">
    <location>
        <begin position="369"/>
        <end position="391"/>
    </location>
</feature>
<feature type="transmembrane region" description="Helical" evidence="1">
    <location>
        <begin position="401"/>
        <end position="423"/>
    </location>
</feature>
<feature type="transmembrane region" description="Helical" evidence="1">
    <location>
        <begin position="436"/>
        <end position="456"/>
    </location>
</feature>
<feature type="transmembrane region" description="Helical" evidence="1">
    <location>
        <begin position="476"/>
        <end position="495"/>
    </location>
</feature>
<feature type="transmembrane region" description="Helical" evidence="1">
    <location>
        <begin position="515"/>
        <end position="534"/>
    </location>
</feature>
<feature type="transmembrane region" description="Helical" evidence="1">
    <location>
        <begin position="549"/>
        <end position="571"/>
    </location>
</feature>